<evidence type="ECO:0000269" key="1">
    <source>
    </source>
</evidence>
<evidence type="ECO:0000305" key="2"/>
<organism>
    <name type="scientific">Xenopus tropicalis</name>
    <name type="common">Western clawed frog</name>
    <name type="synonym">Silurana tropicalis</name>
    <dbReference type="NCBI Taxonomy" id="8364"/>
    <lineage>
        <taxon>Eukaryota</taxon>
        <taxon>Metazoa</taxon>
        <taxon>Chordata</taxon>
        <taxon>Craniata</taxon>
        <taxon>Vertebrata</taxon>
        <taxon>Euteleostomi</taxon>
        <taxon>Amphibia</taxon>
        <taxon>Batrachia</taxon>
        <taxon>Anura</taxon>
        <taxon>Pipoidea</taxon>
        <taxon>Pipidae</taxon>
        <taxon>Xenopodinae</taxon>
        <taxon>Xenopus</taxon>
        <taxon>Silurana</taxon>
    </lineage>
</organism>
<name>XT7_XENTR</name>
<sequence>GLLGPLLKIAAKVGSNLL</sequence>
<feature type="peptide" id="PRO_0000043869" description="Antimicrobial peptide 7">
    <location>
        <begin position="1"/>
        <end position="18"/>
    </location>
</feature>
<feature type="modified residue" description="Leucine amide" evidence="1">
    <location>
        <position position="18"/>
    </location>
</feature>
<feature type="mutagenesis site" description="Induces a decrease in cationicity leading to a more than a 10-fold decrease in antimicrobial activities." evidence="1">
    <location>
        <position position="8"/>
    </location>
</feature>
<dbReference type="BMRB" id="P84381"/>
<dbReference type="InParanoid" id="P84381"/>
<dbReference type="Proteomes" id="UP000008143">
    <property type="component" value="Unplaced"/>
</dbReference>
<dbReference type="GO" id="GO:0005576">
    <property type="term" value="C:extracellular region"/>
    <property type="evidence" value="ECO:0000314"/>
    <property type="project" value="UniProtKB"/>
</dbReference>
<dbReference type="GO" id="GO:0050832">
    <property type="term" value="P:defense response to fungus"/>
    <property type="evidence" value="ECO:0000314"/>
    <property type="project" value="UniProtKB"/>
</dbReference>
<dbReference type="GO" id="GO:0050829">
    <property type="term" value="P:defense response to Gram-negative bacterium"/>
    <property type="evidence" value="ECO:0000314"/>
    <property type="project" value="UniProtKB"/>
</dbReference>
<dbReference type="GO" id="GO:0050830">
    <property type="term" value="P:defense response to Gram-positive bacterium"/>
    <property type="evidence" value="ECO:0000314"/>
    <property type="project" value="UniProtKB"/>
</dbReference>
<dbReference type="GO" id="GO:0044179">
    <property type="term" value="P:hemolysis in another organism"/>
    <property type="evidence" value="ECO:0000314"/>
    <property type="project" value="UniProtKB"/>
</dbReference>
<proteinExistence type="evidence at protein level"/>
<reference evidence="2" key="1">
    <citation type="journal article" date="2001" name="Biochim. Biophys. Acta">
        <title>Antimicrobial peptides isolated from skin secretions of the diploid frog, Xenopus tropicalis (Pipidae).</title>
        <authorList>
            <person name="Ali M.F."/>
            <person name="Soto A."/>
            <person name="Knoop F.C."/>
            <person name="Conlon J.M."/>
        </authorList>
    </citation>
    <scope>PROTEIN SEQUENCE</scope>
    <scope>FUNCTION</scope>
    <scope>SUBCELLULAR LOCATION</scope>
    <scope>TISSUE SPECIFICITY</scope>
    <scope>MASS SPECTROMETRY</scope>
    <scope>CIRCULAR DICHROISM ANALYSIS</scope>
    <scope>AMIDATION AT LEU-18</scope>
    <scope>MUTAGENESIS OF LYS-8</scope>
    <scope>SYNTHESIS</scope>
    <source>
        <tissue evidence="1">Skin secretion</tissue>
    </source>
</reference>
<protein>
    <recommendedName>
        <fullName>Antimicrobial peptide 7</fullName>
    </recommendedName>
    <alternativeName>
        <fullName>XT-7</fullName>
    </alternativeName>
</protein>
<keyword id="KW-0027">Amidation</keyword>
<keyword id="KW-0878">Amphibian defense peptide</keyword>
<keyword id="KW-0044">Antibiotic</keyword>
<keyword id="KW-0929">Antimicrobial</keyword>
<keyword id="KW-0204">Cytolysis</keyword>
<keyword id="KW-0903">Direct protein sequencing</keyword>
<keyword id="KW-0295">Fungicide</keyword>
<keyword id="KW-0354">Hemolysis</keyword>
<keyword id="KW-1185">Reference proteome</keyword>
<keyword id="KW-0964">Secreted</keyword>
<accession>P84381</accession>
<comment type="function">
    <text evidence="1">Has very strong antibacterial activity against many Gram-negative bacteria and the Gram-positive bacteria S.pneumoniae and Enterococcus sp. There is moderate antimicrobial activity against the Gram-negative bacterium P.aeruginosa and yeast C.albicans and weaker activity against the Streptococcal strains and E.coli. Has hemolytic activity against human red blood cells. Seems to disrupt the membranes by adopting an alpha-helical conformation.</text>
</comment>
<comment type="subcellular location">
    <subcellularLocation>
        <location evidence="1">Secreted</location>
    </subcellularLocation>
</comment>
<comment type="tissue specificity">
    <text evidence="1">Expressed by the skin glands.</text>
</comment>
<comment type="PTM">
    <text evidence="1">Amidation on Leu-18 is required to adopt an alpha-helical conformation in a hydrophobic solvent. The absence of amidation leads to a decrease in cationicity leading to a more than a 10-fold decrease in antimicrobial activities.</text>
</comment>
<comment type="mass spectrometry"/>